<organism>
    <name type="scientific">Gallus gallus</name>
    <name type="common">Chicken</name>
    <dbReference type="NCBI Taxonomy" id="9031"/>
    <lineage>
        <taxon>Eukaryota</taxon>
        <taxon>Metazoa</taxon>
        <taxon>Chordata</taxon>
        <taxon>Craniata</taxon>
        <taxon>Vertebrata</taxon>
        <taxon>Euteleostomi</taxon>
        <taxon>Archelosauria</taxon>
        <taxon>Archosauria</taxon>
        <taxon>Dinosauria</taxon>
        <taxon>Saurischia</taxon>
        <taxon>Theropoda</taxon>
        <taxon>Coelurosauria</taxon>
        <taxon>Aves</taxon>
        <taxon>Neognathae</taxon>
        <taxon>Galloanserae</taxon>
        <taxon>Galliformes</taxon>
        <taxon>Phasianidae</taxon>
        <taxon>Phasianinae</taxon>
        <taxon>Gallus</taxon>
    </lineage>
</organism>
<feature type="chain" id="PRO_0000069876" description="Melatonin receptor type 1C">
    <location>
        <begin position="1"/>
        <end position="346"/>
    </location>
</feature>
<feature type="topological domain" description="Extracellular" evidence="2">
    <location>
        <begin position="1"/>
        <end position="26"/>
    </location>
</feature>
<feature type="transmembrane region" description="Helical; Name=1" evidence="2">
    <location>
        <begin position="27"/>
        <end position="47"/>
    </location>
</feature>
<feature type="topological domain" description="Cytoplasmic" evidence="2">
    <location>
        <begin position="48"/>
        <end position="60"/>
    </location>
</feature>
<feature type="transmembrane region" description="Helical; Name=2" evidence="2">
    <location>
        <begin position="61"/>
        <end position="81"/>
    </location>
</feature>
<feature type="topological domain" description="Extracellular" evidence="2">
    <location>
        <begin position="82"/>
        <end position="99"/>
    </location>
</feature>
<feature type="transmembrane region" description="Helical; Name=3" evidence="2">
    <location>
        <begin position="100"/>
        <end position="120"/>
    </location>
</feature>
<feature type="topological domain" description="Cytoplasmic" evidence="2">
    <location>
        <begin position="121"/>
        <end position="139"/>
    </location>
</feature>
<feature type="transmembrane region" description="Helical; Name=4" evidence="2">
    <location>
        <begin position="140"/>
        <end position="160"/>
    </location>
</feature>
<feature type="topological domain" description="Extracellular" evidence="2">
    <location>
        <begin position="161"/>
        <end position="184"/>
    </location>
</feature>
<feature type="transmembrane region" description="Helical; Name=5" evidence="2">
    <location>
        <begin position="185"/>
        <end position="205"/>
    </location>
</feature>
<feature type="topological domain" description="Cytoplasmic" evidence="2">
    <location>
        <begin position="206"/>
        <end position="237"/>
    </location>
</feature>
<feature type="transmembrane region" description="Helical; Name=6" evidence="2">
    <location>
        <begin position="238"/>
        <end position="258"/>
    </location>
</feature>
<feature type="topological domain" description="Extracellular" evidence="2">
    <location>
        <begin position="259"/>
        <end position="271"/>
    </location>
</feature>
<feature type="transmembrane region" description="Helical; Name=7" evidence="2">
    <location>
        <begin position="272"/>
        <end position="292"/>
    </location>
</feature>
<feature type="topological domain" description="Cytoplasmic" evidence="2">
    <location>
        <begin position="293"/>
        <end position="346"/>
    </location>
</feature>
<feature type="region of interest" description="Disordered" evidence="4">
    <location>
        <begin position="326"/>
        <end position="346"/>
    </location>
</feature>
<feature type="compositionally biased region" description="Polar residues" evidence="4">
    <location>
        <begin position="335"/>
        <end position="346"/>
    </location>
</feature>
<feature type="glycosylation site" description="N-linked (GlcNAc...) asparagine" evidence="2">
    <location>
        <position position="7"/>
    </location>
</feature>
<feature type="disulfide bond" evidence="3">
    <location>
        <begin position="97"/>
        <end position="174"/>
    </location>
</feature>
<name>MTR1C_CHICK</name>
<proteinExistence type="evidence at transcript level"/>
<evidence type="ECO:0000250" key="1"/>
<evidence type="ECO:0000255" key="2"/>
<evidence type="ECO:0000255" key="3">
    <source>
        <dbReference type="PROSITE-ProRule" id="PRU00521"/>
    </source>
</evidence>
<evidence type="ECO:0000256" key="4">
    <source>
        <dbReference type="SAM" id="MobiDB-lite"/>
    </source>
</evidence>
<dbReference type="EMBL" id="U31821">
    <property type="protein sequence ID" value="AAA92499.1"/>
    <property type="molecule type" value="mRNA"/>
</dbReference>
<dbReference type="RefSeq" id="NP_990692.1">
    <property type="nucleotide sequence ID" value="NM_205361.2"/>
</dbReference>
<dbReference type="SMR" id="P49288"/>
<dbReference type="FunCoup" id="P49288">
    <property type="interactions" value="122"/>
</dbReference>
<dbReference type="STRING" id="9031.ENSGALP00000014739"/>
<dbReference type="BindingDB" id="P49288"/>
<dbReference type="ChEMBL" id="CHEMBL3196"/>
<dbReference type="DrugCentral" id="P49288"/>
<dbReference type="GlyGen" id="P49288">
    <property type="glycosylation" value="1 site"/>
</dbReference>
<dbReference type="PaxDb" id="9031-ENSGALP00000014739"/>
<dbReference type="Ensembl" id="ENSGALT00000122013">
    <property type="protein sequence ID" value="ENSGALP00000092812"/>
    <property type="gene ID" value="ENSGALG00000062491"/>
</dbReference>
<dbReference type="Ensembl" id="ENSGALT00010027238.1">
    <property type="protein sequence ID" value="ENSGALP00010015507.1"/>
    <property type="gene ID" value="ENSGALG00010011388.1"/>
</dbReference>
<dbReference type="GeneID" id="396318"/>
<dbReference type="KEGG" id="gga:396318"/>
<dbReference type="CTD" id="9248"/>
<dbReference type="VEuPathDB" id="HostDB:geneid_396318"/>
<dbReference type="eggNOG" id="KOG3656">
    <property type="taxonomic scope" value="Eukaryota"/>
</dbReference>
<dbReference type="GeneTree" id="ENSGT00940000160515"/>
<dbReference type="HOGENOM" id="CLU_009579_3_3_1"/>
<dbReference type="InParanoid" id="P49288"/>
<dbReference type="OMA" id="YLCLTWL"/>
<dbReference type="OrthoDB" id="10044919at2759"/>
<dbReference type="PhylomeDB" id="P49288"/>
<dbReference type="PRO" id="PR:P49288"/>
<dbReference type="Proteomes" id="UP000000539">
    <property type="component" value="Chromosome 4"/>
</dbReference>
<dbReference type="Bgee" id="ENSGALG00000009067">
    <property type="expression patterns" value="Expressed in lung and 7 other cell types or tissues"/>
</dbReference>
<dbReference type="GO" id="GO:0005654">
    <property type="term" value="C:nucleoplasm"/>
    <property type="evidence" value="ECO:0007669"/>
    <property type="project" value="Ensembl"/>
</dbReference>
<dbReference type="GO" id="GO:0005886">
    <property type="term" value="C:plasma membrane"/>
    <property type="evidence" value="ECO:0000318"/>
    <property type="project" value="GO_Central"/>
</dbReference>
<dbReference type="GO" id="GO:0004930">
    <property type="term" value="F:G protein-coupled receptor activity"/>
    <property type="evidence" value="ECO:0000318"/>
    <property type="project" value="GO_Central"/>
</dbReference>
<dbReference type="GO" id="GO:1904408">
    <property type="term" value="F:melatonin binding"/>
    <property type="evidence" value="ECO:0000314"/>
    <property type="project" value="AgBase"/>
</dbReference>
<dbReference type="GO" id="GO:0008502">
    <property type="term" value="F:melatonin receptor activity"/>
    <property type="evidence" value="ECO:0007669"/>
    <property type="project" value="InterPro"/>
</dbReference>
<dbReference type="GO" id="GO:0007186">
    <property type="term" value="P:G protein-coupled receptor signaling pathway"/>
    <property type="evidence" value="ECO:0000318"/>
    <property type="project" value="GO_Central"/>
</dbReference>
<dbReference type="GO" id="GO:0046325">
    <property type="term" value="P:negative regulation of D-glucose import"/>
    <property type="evidence" value="ECO:0000314"/>
    <property type="project" value="AgBase"/>
</dbReference>
<dbReference type="GO" id="GO:0045820">
    <property type="term" value="P:negative regulation of glycolytic process"/>
    <property type="evidence" value="ECO:0000314"/>
    <property type="project" value="AgBase"/>
</dbReference>
<dbReference type="FunFam" id="1.20.1070.10:FF:000056">
    <property type="entry name" value="Melatonin receptor type 1A"/>
    <property type="match status" value="1"/>
</dbReference>
<dbReference type="Gene3D" id="1.20.1070.10">
    <property type="entry name" value="Rhodopsin 7-helix transmembrane proteins"/>
    <property type="match status" value="1"/>
</dbReference>
<dbReference type="InterPro" id="IPR000276">
    <property type="entry name" value="GPCR_Rhodpsn"/>
</dbReference>
<dbReference type="InterPro" id="IPR017452">
    <property type="entry name" value="GPCR_Rhodpsn_7TM"/>
</dbReference>
<dbReference type="InterPro" id="IPR002279">
    <property type="entry name" value="Mel_rcpt_1C"/>
</dbReference>
<dbReference type="InterPro" id="IPR000025">
    <property type="entry name" value="Melatonin_rcpt"/>
</dbReference>
<dbReference type="PANTHER" id="PTHR24228">
    <property type="entry name" value="B2 BRADYKININ RECEPTOR/ANGIOTENSIN II RECEPTOR"/>
    <property type="match status" value="1"/>
</dbReference>
<dbReference type="PANTHER" id="PTHR24228:SF56">
    <property type="entry name" value="MELATONIN-RELATED RECEPTOR"/>
    <property type="match status" value="1"/>
</dbReference>
<dbReference type="Pfam" id="PF00001">
    <property type="entry name" value="7tm_1"/>
    <property type="match status" value="1"/>
</dbReference>
<dbReference type="PRINTS" id="PR00237">
    <property type="entry name" value="GPCRRHODOPSN"/>
</dbReference>
<dbReference type="PRINTS" id="PR01150">
    <property type="entry name" value="MELATONIN1CR"/>
</dbReference>
<dbReference type="PRINTS" id="PR00857">
    <property type="entry name" value="MELATONINR"/>
</dbReference>
<dbReference type="SMART" id="SM01381">
    <property type="entry name" value="7TM_GPCR_Srsx"/>
    <property type="match status" value="1"/>
</dbReference>
<dbReference type="SUPFAM" id="SSF81321">
    <property type="entry name" value="Family A G protein-coupled receptor-like"/>
    <property type="match status" value="1"/>
</dbReference>
<dbReference type="PROSITE" id="PS00237">
    <property type="entry name" value="G_PROTEIN_RECEP_F1_1"/>
    <property type="match status" value="1"/>
</dbReference>
<dbReference type="PROSITE" id="PS50262">
    <property type="entry name" value="G_PROTEIN_RECEP_F1_2"/>
    <property type="match status" value="1"/>
</dbReference>
<reference key="1">
    <citation type="journal article" date="1995" name="Neuron">
        <title>Melatonin receptors are for the birds: molecular analysis of two receptor subtypes differentially expressed in chick brain.</title>
        <authorList>
            <person name="Reppert S.M."/>
            <person name="Weaver D.R."/>
            <person name="Cassone V.M."/>
            <person name="Godson C."/>
            <person name="Kolakowski L.F. Jr."/>
        </authorList>
    </citation>
    <scope>NUCLEOTIDE SEQUENCE [MRNA]</scope>
</reference>
<accession>P49288</accession>
<protein>
    <recommendedName>
        <fullName>Melatonin receptor type 1C</fullName>
        <shortName>Mel-1C-R</shortName>
        <shortName>Mel1c receptor</shortName>
    </recommendedName>
    <alternativeName>
        <fullName>CKB</fullName>
    </alternativeName>
</protein>
<keyword id="KW-1003">Cell membrane</keyword>
<keyword id="KW-1015">Disulfide bond</keyword>
<keyword id="KW-0297">G-protein coupled receptor</keyword>
<keyword id="KW-0325">Glycoprotein</keyword>
<keyword id="KW-0472">Membrane</keyword>
<keyword id="KW-0675">Receptor</keyword>
<keyword id="KW-1185">Reference proteome</keyword>
<keyword id="KW-0807">Transducer</keyword>
<keyword id="KW-0812">Transmembrane</keyword>
<keyword id="KW-1133">Transmembrane helix</keyword>
<comment type="function">
    <text evidence="1">High affinity receptor for melatonin. The activity of this receptor is mediated by pertussis toxin sensitive G proteins that inhibits adenylate cyclase activity (By similarity).</text>
</comment>
<comment type="subcellular location">
    <subcellularLocation>
        <location>Cell membrane</location>
        <topology>Multi-pass membrane protein</topology>
    </subcellularLocation>
</comment>
<comment type="tissue specificity">
    <text>Expressed in optic tectum, neostriatum, hypothalamus, thalamus and pineal gland, less in cerebellum and retina.</text>
</comment>
<comment type="similarity">
    <text evidence="3">Belongs to the G-protein coupled receptor 1 family.</text>
</comment>
<sequence>MERPGSNGSCSGCRLEGGPAARAASGLAAVLIVTIVVDVLGNALVILSVLRNKKLRNAGNIFVVSLSVADLVVAVYPYPLILSAIFHNGWTMGNIHCQISGFLMGLSVIGSIFNITAIAINRYCYICHSLRYDKLFNLKNTCCYICLTWTLTVVAIVPNFFVGSLQYDPRIYSCTFAQTVSTSYTITVVVVHFIVPLSIVTFCYLRIWILVIQVKHRVRQDCKQKIRAADIRNFLTMFVVFVLFAVCWGPLNFIGLAVSINPSKVQPHIPEWLFVLSYFMAYFNSCLNAVIYGLLNQNFRKEYKRILLMLRTPRLLFIDVSKGGTEGLKSKPSPAVTNNNQAEIHL</sequence>